<evidence type="ECO:0000256" key="1">
    <source>
        <dbReference type="SAM" id="MobiDB-lite"/>
    </source>
</evidence>
<dbReference type="EMBL" id="X12831">
    <property type="protein sequence ID" value="CAA31313.1"/>
    <property type="molecule type" value="Genomic_DNA"/>
</dbReference>
<dbReference type="PIR" id="S28101">
    <property type="entry name" value="S28101"/>
</dbReference>
<dbReference type="RefSeq" id="NP_943090.1">
    <property type="nucleotide sequence ID" value="NC_005243.1"/>
</dbReference>
<dbReference type="SMR" id="P14503"/>
<reference key="1">
    <citation type="submission" date="1988-09" db="EMBL/GenBank/DDBJ databases">
        <authorList>
            <person name="Dreher J."/>
            <person name="Matzura H."/>
        </authorList>
    </citation>
    <scope>NUCLEOTIDE SEQUENCE [GENOMIC DNA]</scope>
    <source>
        <strain>RN154</strain>
    </source>
</reference>
<reference key="2">
    <citation type="journal article" date="1988" name="Nucleic Acids Res.">
        <title>Replication control of the Staphylococcus aureus chloramphenicol resistance plasmids pC223 and pUB112 in Bacillus subtilis.</title>
        <authorList>
            <person name="Ehret M."/>
            <person name="Matzura H."/>
        </authorList>
    </citation>
    <scope>PROTEIN SEQUENCE OF 181-236</scope>
</reference>
<sequence>MNNEKNKQDRENLNRQDERKSSEIKSERKSGLDLIEVRKQLDRIESVANEKNENESEKLENLKNRIEELEKSEQDRNERTNILMKRLEASTSNFNNKLDVFEEKTKHARLNFETTAKHYIKRLDEDNLKLDFQQAIQDELSDTKDEIREVTKQAREETKEYKEILESKIKDHNKVVDKSNTALKVMTKGVTNIFFVLIIFVLVMLVTGPIVISLVLNIYIALLMVLLMTTKVHGDI</sequence>
<protein>
    <recommendedName>
        <fullName>Uncharacterized 27.7 kDa protein</fullName>
    </recommendedName>
</protein>
<geneLocation type="plasmid">
    <name>pC223</name>
</geneLocation>
<accession>P14503</accession>
<proteinExistence type="evidence at protein level"/>
<name>YP2C_STAAU</name>
<feature type="chain" id="PRO_0000068526" description="Uncharacterized 27.7 kDa protein">
    <location>
        <begin position="1"/>
        <end position="236"/>
    </location>
</feature>
<feature type="region of interest" description="Disordered" evidence="1">
    <location>
        <begin position="1"/>
        <end position="29"/>
    </location>
</feature>
<organism>
    <name type="scientific">Staphylococcus aureus</name>
    <dbReference type="NCBI Taxonomy" id="1280"/>
    <lineage>
        <taxon>Bacteria</taxon>
        <taxon>Bacillati</taxon>
        <taxon>Bacillota</taxon>
        <taxon>Bacilli</taxon>
        <taxon>Bacillales</taxon>
        <taxon>Staphylococcaceae</taxon>
        <taxon>Staphylococcus</taxon>
    </lineage>
</organism>
<keyword id="KW-0903">Direct protein sequencing</keyword>
<keyword id="KW-0614">Plasmid</keyword>